<name>RNG1A_ARATH</name>
<organism>
    <name type="scientific">Arabidopsis thaliana</name>
    <name type="common">Mouse-ear cress</name>
    <dbReference type="NCBI Taxonomy" id="3702"/>
    <lineage>
        <taxon>Eukaryota</taxon>
        <taxon>Viridiplantae</taxon>
        <taxon>Streptophyta</taxon>
        <taxon>Embryophyta</taxon>
        <taxon>Tracheophyta</taxon>
        <taxon>Spermatophyta</taxon>
        <taxon>Magnoliopsida</taxon>
        <taxon>eudicotyledons</taxon>
        <taxon>Gunneridae</taxon>
        <taxon>Pentapetalae</taxon>
        <taxon>rosids</taxon>
        <taxon>malvids</taxon>
        <taxon>Brassicales</taxon>
        <taxon>Brassicaceae</taxon>
        <taxon>Camelineae</taxon>
        <taxon>Arabidopsis</taxon>
    </lineage>
</organism>
<gene>
    <name type="primary">RING1A</name>
    <name type="synonym">RF434</name>
    <name type="ordered locus">At5g44280</name>
    <name type="ORF">K9L2.3</name>
</gene>
<feature type="chain" id="PRO_0000397096" description="Putative E3 ubiquitin-protein ligase RING1a">
    <location>
        <begin position="1"/>
        <end position="522"/>
    </location>
</feature>
<feature type="zinc finger region" description="RING-type" evidence="2">
    <location>
        <begin position="136"/>
        <end position="176"/>
    </location>
</feature>
<feature type="region of interest" description="Disordered" evidence="3">
    <location>
        <begin position="1"/>
        <end position="119"/>
    </location>
</feature>
<feature type="region of interest" description="Disordered" evidence="3">
    <location>
        <begin position="250"/>
        <end position="347"/>
    </location>
</feature>
<feature type="region of interest" description="Disordered" evidence="3">
    <location>
        <begin position="363"/>
        <end position="385"/>
    </location>
</feature>
<feature type="compositionally biased region" description="Polar residues" evidence="3">
    <location>
        <begin position="1"/>
        <end position="10"/>
    </location>
</feature>
<feature type="compositionally biased region" description="Basic and acidic residues" evidence="3">
    <location>
        <begin position="32"/>
        <end position="64"/>
    </location>
</feature>
<feature type="compositionally biased region" description="Acidic residues" evidence="3">
    <location>
        <begin position="65"/>
        <end position="106"/>
    </location>
</feature>
<feature type="compositionally biased region" description="Basic and acidic residues" evidence="3">
    <location>
        <begin position="287"/>
        <end position="306"/>
    </location>
</feature>
<feature type="compositionally biased region" description="Low complexity" evidence="3">
    <location>
        <begin position="316"/>
        <end position="325"/>
    </location>
</feature>
<feature type="compositionally biased region" description="Polar residues" evidence="3">
    <location>
        <begin position="326"/>
        <end position="336"/>
    </location>
</feature>
<feature type="compositionally biased region" description="Polar residues" evidence="3">
    <location>
        <begin position="366"/>
        <end position="384"/>
    </location>
</feature>
<sequence length="522" mass="59198">MSVKNNSFSSAEIPDVADQPRDRFNPEATQDLQEKDETKEEKEGDEEVKHDEAEEDQEVVKPNDAEEDDDGDDAEEDEEEEVEAEEDEEAEEEEEEEEEEEEEEEDSKERSPSSISGDQSEFMEIDLGEIRKDVQCPICLGIIKKTRTVMECLHRFCRECIDKSMRLGNNECPACRKHCASRRSLRDDPKFDALIAALFTNIDSYEEEELAFHEDEMARNKQIQASIAQISQRQSEALVKRRSLGKEAAVLMRSPRIASGSRRRRNSRNMEQQNASEAHEDDDNDDNNNRGRDKDSSSDERGTEVRQKKRRKRSTSRSTQHPSSSGANKNNGNCADNDTEVYRDTKGISPGLVWNPEILAWGRGGTRSNTRHGNNTSGGSSKSVRNARVNKLVEYLRSSVDGSSVELDIHVKLVSLDTKCIPDLPQPYLCCRPTLLVKQLREFVALQIHLKTEEVELLVTRRRVGEDAAIENLPAVTPASAAASKDEMLSLEDNETLSRLKIDFISSHEQHLIIAYRKKQTE</sequence>
<evidence type="ECO:0000250" key="1"/>
<evidence type="ECO:0000255" key="2">
    <source>
        <dbReference type="PROSITE-ProRule" id="PRU00175"/>
    </source>
</evidence>
<evidence type="ECO:0000256" key="3">
    <source>
        <dbReference type="SAM" id="MobiDB-lite"/>
    </source>
</evidence>
<evidence type="ECO:0000269" key="4">
    <source>
    </source>
</evidence>
<evidence type="ECO:0000305" key="5"/>
<comment type="function">
    <text evidence="1">Putative E3 ubiquitin-protein ligase that mediates monoubiquitination of 'Lys-119' of histone H2A (H2AK119ub), thereby playing a central role in histone code and gene regulation.</text>
</comment>
<comment type="function">
    <text evidence="4">As part of the PRC1-like complex, repress class I KNOX gene expression. PcG PRC1 complex maintains the transcriptionally repressive state of many genes, including Hox genes, throughout development. PcG PRC1 complex acts via chromatin remodeling and modification of histones, rendering chromatin heritably changed in its expressibility.</text>
</comment>
<comment type="catalytic activity">
    <reaction>
        <text>S-ubiquitinyl-[E2 ubiquitin-conjugating enzyme]-L-cysteine + [acceptor protein]-L-lysine = [E2 ubiquitin-conjugating enzyme]-L-cysteine + N(6)-ubiquitinyl-[acceptor protein]-L-lysine.</text>
        <dbReference type="EC" id="2.3.2.27"/>
    </reaction>
</comment>
<comment type="pathway">
    <text>Protein modification; protein ubiquitination.</text>
</comment>
<comment type="subunit">
    <text evidence="4">Homodimer or heterodimer with RING1B. Interacts with CLF. Component of the PRC1-like complex, at least composed of RING1A, RING1B and LHP1.</text>
</comment>
<comment type="subcellular location">
    <subcellularLocation>
        <location evidence="4">Nucleus</location>
    </subcellularLocation>
</comment>
<comment type="alternative products">
    <event type="alternative splicing"/>
    <isoform>
        <id>Q9FKW0-1</id>
        <name>1</name>
        <sequence type="displayed"/>
    </isoform>
    <text>A number of isoforms are produced. According to EST sequences.</text>
</comment>
<comment type="domain">
    <text evidence="1">The RING-type zinc finger domain mediates binding to an E2 ubiquitin-conjugating enzyme.</text>
</comment>
<comment type="disruption phenotype">
    <text evidence="4">Normal phenotype. Drastic growth defects like ectopic meristem formation and sterility when associated with the disruption of RING1B.</text>
</comment>
<comment type="sequence caution" evidence="5">
    <conflict type="frameshift">
        <sequence resource="EMBL" id="AK228896"/>
    </conflict>
</comment>
<comment type="sequence caution" evidence="5">
    <conflict type="erroneous gene model prediction">
        <sequence resource="EMBL-CDS" id="BAB10113"/>
    </conflict>
</comment>
<reference key="1">
    <citation type="journal article" date="1998" name="DNA Res.">
        <title>Structural analysis of Arabidopsis thaliana chromosome 5. V. Sequence features of the regions of 1,381,565 bp covered by twenty one physically assigned P1 and TAC clones.</title>
        <authorList>
            <person name="Kaneko T."/>
            <person name="Kotani H."/>
            <person name="Nakamura Y."/>
            <person name="Sato S."/>
            <person name="Asamizu E."/>
            <person name="Miyajima N."/>
            <person name="Tabata S."/>
        </authorList>
    </citation>
    <scope>NUCLEOTIDE SEQUENCE [LARGE SCALE GENOMIC DNA]</scope>
    <source>
        <strain>cv. Columbia</strain>
    </source>
</reference>
<reference key="2">
    <citation type="journal article" date="2017" name="Plant J.">
        <title>Araport11: a complete reannotation of the Arabidopsis thaliana reference genome.</title>
        <authorList>
            <person name="Cheng C.Y."/>
            <person name="Krishnakumar V."/>
            <person name="Chan A.P."/>
            <person name="Thibaud-Nissen F."/>
            <person name="Schobel S."/>
            <person name="Town C.D."/>
        </authorList>
    </citation>
    <scope>GENOME REANNOTATION</scope>
    <source>
        <strain>cv. Columbia</strain>
    </source>
</reference>
<reference key="3">
    <citation type="submission" date="2006-07" db="EMBL/GenBank/DDBJ databases">
        <title>Large-scale analysis of RIKEN Arabidopsis full-length (RAFL) cDNAs.</title>
        <authorList>
            <person name="Totoki Y."/>
            <person name="Seki M."/>
            <person name="Ishida J."/>
            <person name="Nakajima M."/>
            <person name="Enju A."/>
            <person name="Kamiya A."/>
            <person name="Narusaka M."/>
            <person name="Shin-i T."/>
            <person name="Nakagawa M."/>
            <person name="Sakamoto N."/>
            <person name="Oishi K."/>
            <person name="Kohara Y."/>
            <person name="Kobayashi M."/>
            <person name="Toyoda A."/>
            <person name="Sakaki Y."/>
            <person name="Sakurai T."/>
            <person name="Iida K."/>
            <person name="Akiyama K."/>
            <person name="Satou M."/>
            <person name="Toyoda T."/>
            <person name="Konagaya A."/>
            <person name="Carninci P."/>
            <person name="Kawai J."/>
            <person name="Hayashizaki Y."/>
            <person name="Shinozaki K."/>
        </authorList>
    </citation>
    <scope>NUCLEOTIDE SEQUENCE [LARGE SCALE MRNA]</scope>
    <source>
        <strain>cv. Columbia</strain>
    </source>
</reference>
<reference key="4">
    <citation type="journal article" date="2002" name="Genome Biol.">
        <title>Evaluation and classification of RING-finger domains encoded by the Arabidopsis genome.</title>
        <authorList>
            <person name="Kosarev P."/>
            <person name="Mayer K.F.X."/>
            <person name="Hardtke C.S."/>
        </authorList>
    </citation>
    <scope>GENE FAMILY ORGANIZATION</scope>
</reference>
<reference key="5">
    <citation type="journal article" date="2008" name="Curr. Biol.">
        <title>Polycomb silencing of KNOX genes confines shoot stem cell niches in Arabidopsis.</title>
        <authorList>
            <person name="Xu L."/>
            <person name="Shen W.H."/>
        </authorList>
    </citation>
    <scope>FUNCTION</scope>
    <scope>SUBCELLULAR LOCATION</scope>
    <scope>INTERACTION WITH CLF</scope>
    <scope>COMPONENT OF THE PRC1-LIKE COMPLEX</scope>
    <scope>DISRUPTION PHENOTYPE</scope>
</reference>
<proteinExistence type="evidence at protein level"/>
<keyword id="KW-0002">3D-structure</keyword>
<keyword id="KW-0025">Alternative splicing</keyword>
<keyword id="KW-0156">Chromatin regulator</keyword>
<keyword id="KW-0479">Metal-binding</keyword>
<keyword id="KW-0539">Nucleus</keyword>
<keyword id="KW-1185">Reference proteome</keyword>
<keyword id="KW-0678">Repressor</keyword>
<keyword id="KW-0804">Transcription</keyword>
<keyword id="KW-0805">Transcription regulation</keyword>
<keyword id="KW-0808">Transferase</keyword>
<keyword id="KW-0833">Ubl conjugation pathway</keyword>
<keyword id="KW-0862">Zinc</keyword>
<keyword id="KW-0863">Zinc-finger</keyword>
<protein>
    <recommendedName>
        <fullName>Putative E3 ubiquitin-protein ligase RING1a</fullName>
        <ecNumber>2.3.2.27</ecNumber>
    </recommendedName>
    <alternativeName>
        <fullName>Polycomb complex protein RING1a</fullName>
    </alternativeName>
    <alternativeName>
        <fullName>Protein RING1a</fullName>
        <shortName>AtRING1a</shortName>
    </alternativeName>
    <alternativeName>
        <fullName evidence="5">RING-type E3 ubiquitin transferase RING1a</fullName>
    </alternativeName>
    <alternativeName>
        <fullName>Ring finger protein 434</fullName>
    </alternativeName>
</protein>
<accession>Q9FKW0</accession>
<dbReference type="EC" id="2.3.2.27"/>
<dbReference type="EMBL" id="AB011475">
    <property type="protein sequence ID" value="BAB10113.1"/>
    <property type="status" value="ALT_SEQ"/>
    <property type="molecule type" value="Genomic_DNA"/>
</dbReference>
<dbReference type="EMBL" id="CP002688">
    <property type="protein sequence ID" value="AED95085.1"/>
    <property type="molecule type" value="Genomic_DNA"/>
</dbReference>
<dbReference type="EMBL" id="AK228896">
    <property type="status" value="NOT_ANNOTATED_CDS"/>
    <property type="molecule type" value="mRNA"/>
</dbReference>
<dbReference type="RefSeq" id="NP_199241.2">
    <molecule id="Q9FKW0-1"/>
    <property type="nucleotide sequence ID" value="NM_123795.5"/>
</dbReference>
<dbReference type="PDB" id="5XVW">
    <property type="method" value="X-ray"/>
    <property type="resolution" value="1.85 A"/>
    <property type="chains" value="D/F=358-371"/>
</dbReference>
<dbReference type="PDB" id="5Y21">
    <property type="method" value="X-ray"/>
    <property type="resolution" value="1.77 A"/>
    <property type="chains" value="C/D=304-317"/>
</dbReference>
<dbReference type="PDBsum" id="5XVW"/>
<dbReference type="PDBsum" id="5Y21"/>
<dbReference type="SMR" id="Q9FKW0"/>
<dbReference type="BioGRID" id="19701">
    <property type="interactions" value="5"/>
</dbReference>
<dbReference type="FunCoup" id="Q9FKW0">
    <property type="interactions" value="857"/>
</dbReference>
<dbReference type="STRING" id="3702.Q9FKW0"/>
<dbReference type="GlyGen" id="Q9FKW0">
    <property type="glycosylation" value="1 site"/>
</dbReference>
<dbReference type="iPTMnet" id="Q9FKW0"/>
<dbReference type="PaxDb" id="3702-AT5G44280.2"/>
<dbReference type="ProteomicsDB" id="227973">
    <molecule id="Q9FKW0-1"/>
</dbReference>
<dbReference type="EnsemblPlants" id="AT5G44280.1">
    <molecule id="Q9FKW0-1"/>
    <property type="protein sequence ID" value="AT5G44280.1"/>
    <property type="gene ID" value="AT5G44280"/>
</dbReference>
<dbReference type="GeneID" id="834451"/>
<dbReference type="Gramene" id="AT5G44280.1">
    <molecule id="Q9FKW0-1"/>
    <property type="protein sequence ID" value="AT5G44280.1"/>
    <property type="gene ID" value="AT5G44280"/>
</dbReference>
<dbReference type="KEGG" id="ath:AT5G44280"/>
<dbReference type="Araport" id="AT5G44280"/>
<dbReference type="TAIR" id="AT5G44280">
    <property type="gene designation" value="RING1A"/>
</dbReference>
<dbReference type="eggNOG" id="KOG0311">
    <property type="taxonomic scope" value="Eukaryota"/>
</dbReference>
<dbReference type="HOGENOM" id="CLU_025237_0_0_1"/>
<dbReference type="InParanoid" id="Q9FKW0"/>
<dbReference type="OMA" id="TQARAYI"/>
<dbReference type="PhylomeDB" id="Q9FKW0"/>
<dbReference type="UniPathway" id="UPA00143"/>
<dbReference type="PRO" id="PR:Q9FKW0"/>
<dbReference type="Proteomes" id="UP000006548">
    <property type="component" value="Chromosome 5"/>
</dbReference>
<dbReference type="ExpressionAtlas" id="Q9FKW0">
    <property type="expression patterns" value="baseline and differential"/>
</dbReference>
<dbReference type="GO" id="GO:0005634">
    <property type="term" value="C:nucleus"/>
    <property type="evidence" value="ECO:0000314"/>
    <property type="project" value="UniProtKB"/>
</dbReference>
<dbReference type="GO" id="GO:0035102">
    <property type="term" value="C:PRC1 complex"/>
    <property type="evidence" value="ECO:0000353"/>
    <property type="project" value="UniProtKB"/>
</dbReference>
<dbReference type="GO" id="GO:0016740">
    <property type="term" value="F:transferase activity"/>
    <property type="evidence" value="ECO:0007669"/>
    <property type="project" value="UniProtKB-KW"/>
</dbReference>
<dbReference type="GO" id="GO:0008270">
    <property type="term" value="F:zinc ion binding"/>
    <property type="evidence" value="ECO:0007669"/>
    <property type="project" value="UniProtKB-KW"/>
</dbReference>
<dbReference type="GO" id="GO:0001709">
    <property type="term" value="P:cell fate determination"/>
    <property type="evidence" value="ECO:0000315"/>
    <property type="project" value="UniProtKB"/>
</dbReference>
<dbReference type="GO" id="GO:0010076">
    <property type="term" value="P:maintenance of floral meristem identity"/>
    <property type="evidence" value="ECO:0000315"/>
    <property type="project" value="UniProtKB"/>
</dbReference>
<dbReference type="GO" id="GO:0010077">
    <property type="term" value="P:maintenance of inflorescence meristem identity"/>
    <property type="evidence" value="ECO:0000315"/>
    <property type="project" value="UniProtKB"/>
</dbReference>
<dbReference type="GO" id="GO:0010492">
    <property type="term" value="P:maintenance of shoot apical meristem identity"/>
    <property type="evidence" value="ECO:0000315"/>
    <property type="project" value="UniProtKB"/>
</dbReference>
<dbReference type="GO" id="GO:0045892">
    <property type="term" value="P:negative regulation of DNA-templated transcription"/>
    <property type="evidence" value="ECO:0000316"/>
    <property type="project" value="UniProtKB"/>
</dbReference>
<dbReference type="GO" id="GO:0045814">
    <property type="term" value="P:negative regulation of gene expression, epigenetic"/>
    <property type="evidence" value="ECO:0000316"/>
    <property type="project" value="UniProtKB"/>
</dbReference>
<dbReference type="GO" id="GO:0016567">
    <property type="term" value="P:protein ubiquitination"/>
    <property type="evidence" value="ECO:0007669"/>
    <property type="project" value="UniProtKB-UniPathway"/>
</dbReference>
<dbReference type="CDD" id="cd16531">
    <property type="entry name" value="RING-HC_RING1-like"/>
    <property type="match status" value="1"/>
</dbReference>
<dbReference type="Gene3D" id="3.30.40.10">
    <property type="entry name" value="Zinc/RING finger domain, C3HC4 (zinc finger)"/>
    <property type="match status" value="1"/>
</dbReference>
<dbReference type="InterPro" id="IPR044592">
    <property type="entry name" value="RING1A/B"/>
</dbReference>
<dbReference type="InterPro" id="IPR001841">
    <property type="entry name" value="Znf_RING"/>
</dbReference>
<dbReference type="InterPro" id="IPR013083">
    <property type="entry name" value="Znf_RING/FYVE/PHD"/>
</dbReference>
<dbReference type="InterPro" id="IPR017907">
    <property type="entry name" value="Znf_RING_CS"/>
</dbReference>
<dbReference type="PANTHER" id="PTHR46537:SF9">
    <property type="entry name" value="E3 UBIQUITIN-PROTEIN LIGASE RING1A-RELATED"/>
    <property type="match status" value="1"/>
</dbReference>
<dbReference type="PANTHER" id="PTHR46537">
    <property type="entry name" value="OS11G0578200 PROTEIN"/>
    <property type="match status" value="1"/>
</dbReference>
<dbReference type="Pfam" id="PF13923">
    <property type="entry name" value="zf-C3HC4_2"/>
    <property type="match status" value="1"/>
</dbReference>
<dbReference type="SMART" id="SM00184">
    <property type="entry name" value="RING"/>
    <property type="match status" value="1"/>
</dbReference>
<dbReference type="SUPFAM" id="SSF57850">
    <property type="entry name" value="RING/U-box"/>
    <property type="match status" value="1"/>
</dbReference>
<dbReference type="PROSITE" id="PS00518">
    <property type="entry name" value="ZF_RING_1"/>
    <property type="match status" value="1"/>
</dbReference>
<dbReference type="PROSITE" id="PS50089">
    <property type="entry name" value="ZF_RING_2"/>
    <property type="match status" value="1"/>
</dbReference>